<reference key="1">
    <citation type="journal article" date="2000" name="Nature">
        <title>The genome sequence of the plant pathogen Xylella fastidiosa.</title>
        <authorList>
            <person name="Simpson A.J.G."/>
            <person name="Reinach F.C."/>
            <person name="Arruda P."/>
            <person name="Abreu F.A."/>
            <person name="Acencio M."/>
            <person name="Alvarenga R."/>
            <person name="Alves L.M.C."/>
            <person name="Araya J.E."/>
            <person name="Baia G.S."/>
            <person name="Baptista C.S."/>
            <person name="Barros M.H."/>
            <person name="Bonaccorsi E.D."/>
            <person name="Bordin S."/>
            <person name="Bove J.M."/>
            <person name="Briones M.R.S."/>
            <person name="Bueno M.R.P."/>
            <person name="Camargo A.A."/>
            <person name="Camargo L.E.A."/>
            <person name="Carraro D.M."/>
            <person name="Carrer H."/>
            <person name="Colauto N.B."/>
            <person name="Colombo C."/>
            <person name="Costa F.F."/>
            <person name="Costa M.C.R."/>
            <person name="Costa-Neto C.M."/>
            <person name="Coutinho L.L."/>
            <person name="Cristofani M."/>
            <person name="Dias-Neto E."/>
            <person name="Docena C."/>
            <person name="El-Dorry H."/>
            <person name="Facincani A.P."/>
            <person name="Ferreira A.J.S."/>
            <person name="Ferreira V.C.A."/>
            <person name="Ferro J.A."/>
            <person name="Fraga J.S."/>
            <person name="Franca S.C."/>
            <person name="Franco M.C."/>
            <person name="Frohme M."/>
            <person name="Furlan L.R."/>
            <person name="Garnier M."/>
            <person name="Goldman G.H."/>
            <person name="Goldman M.H.S."/>
            <person name="Gomes S.L."/>
            <person name="Gruber A."/>
            <person name="Ho P.L."/>
            <person name="Hoheisel J.D."/>
            <person name="Junqueira M.L."/>
            <person name="Kemper E.L."/>
            <person name="Kitajima J.P."/>
            <person name="Krieger J.E."/>
            <person name="Kuramae E.E."/>
            <person name="Laigret F."/>
            <person name="Lambais M.R."/>
            <person name="Leite L.C.C."/>
            <person name="Lemos E.G.M."/>
            <person name="Lemos M.V.F."/>
            <person name="Lopes S.A."/>
            <person name="Lopes C.R."/>
            <person name="Machado J.A."/>
            <person name="Machado M.A."/>
            <person name="Madeira A.M.B.N."/>
            <person name="Madeira H.M.F."/>
            <person name="Marino C.L."/>
            <person name="Marques M.V."/>
            <person name="Martins E.A.L."/>
            <person name="Martins E.M.F."/>
            <person name="Matsukuma A.Y."/>
            <person name="Menck C.F.M."/>
            <person name="Miracca E.C."/>
            <person name="Miyaki C.Y."/>
            <person name="Monteiro-Vitorello C.B."/>
            <person name="Moon D.H."/>
            <person name="Nagai M.A."/>
            <person name="Nascimento A.L.T.O."/>
            <person name="Netto L.E.S."/>
            <person name="Nhani A. Jr."/>
            <person name="Nobrega F.G."/>
            <person name="Nunes L.R."/>
            <person name="Oliveira M.A."/>
            <person name="de Oliveira M.C."/>
            <person name="de Oliveira R.C."/>
            <person name="Palmieri D.A."/>
            <person name="Paris A."/>
            <person name="Peixoto B.R."/>
            <person name="Pereira G.A.G."/>
            <person name="Pereira H.A. Jr."/>
            <person name="Pesquero J.B."/>
            <person name="Quaggio R.B."/>
            <person name="Roberto P.G."/>
            <person name="Rodrigues V."/>
            <person name="de Rosa A.J.M."/>
            <person name="de Rosa V.E. Jr."/>
            <person name="de Sa R.G."/>
            <person name="Santelli R.V."/>
            <person name="Sawasaki H.E."/>
            <person name="da Silva A.C.R."/>
            <person name="da Silva A.M."/>
            <person name="da Silva F.R."/>
            <person name="Silva W.A. Jr."/>
            <person name="da Silveira J.F."/>
            <person name="Silvestri M.L.Z."/>
            <person name="Siqueira W.J."/>
            <person name="de Souza A.A."/>
            <person name="de Souza A.P."/>
            <person name="Terenzi M.F."/>
            <person name="Truffi D."/>
            <person name="Tsai S.M."/>
            <person name="Tsuhako M.H."/>
            <person name="Vallada H."/>
            <person name="Van Sluys M.A."/>
            <person name="Verjovski-Almeida S."/>
            <person name="Vettore A.L."/>
            <person name="Zago M.A."/>
            <person name="Zatz M."/>
            <person name="Meidanis J."/>
            <person name="Setubal J.C."/>
        </authorList>
    </citation>
    <scope>NUCLEOTIDE SEQUENCE [LARGE SCALE GENOMIC DNA]</scope>
    <source>
        <strain>9a5c</strain>
    </source>
</reference>
<organism>
    <name type="scientific">Xylella fastidiosa (strain 9a5c)</name>
    <dbReference type="NCBI Taxonomy" id="160492"/>
    <lineage>
        <taxon>Bacteria</taxon>
        <taxon>Pseudomonadati</taxon>
        <taxon>Pseudomonadota</taxon>
        <taxon>Gammaproteobacteria</taxon>
        <taxon>Lysobacterales</taxon>
        <taxon>Lysobacteraceae</taxon>
        <taxon>Xylella</taxon>
    </lineage>
</organism>
<sequence length="272" mass="28574">MSIYTNSKPWTVPALAEAKRNGSKIVMLTAYDAGFARILDANGVDLVLVGDSLGMVVQGHDSTLPVSVHDMVYHTACVARGVRQAMLVVDLPFQADASPERALEAATPLLRVGAQMIKIEGAGHKLEVISYLVEREIPVCSHLGLTPQSVLRFGGYKVQGRGEEAGGRLRAEARAAVEAGATLLLLECVPSQLAAQITTDVSVPTIGIGAGAGCDGQVLVLHDLLGLDSGHPRPKFVKDFLAHGGSVAGAVRAYANAVRDGSFPDVEHTYTS</sequence>
<protein>
    <recommendedName>
        <fullName evidence="1">3-methyl-2-oxobutanoate hydroxymethyltransferase</fullName>
        <ecNumber evidence="1">2.1.2.11</ecNumber>
    </recommendedName>
    <alternativeName>
        <fullName evidence="1">Ketopantoate hydroxymethyltransferase</fullName>
        <shortName evidence="1">KPHMT</shortName>
    </alternativeName>
</protein>
<name>PANB_XYLFA</name>
<gene>
    <name evidence="1" type="primary">panB</name>
    <name type="ordered locus">XF_0229</name>
</gene>
<keyword id="KW-0963">Cytoplasm</keyword>
<keyword id="KW-0460">Magnesium</keyword>
<keyword id="KW-0479">Metal-binding</keyword>
<keyword id="KW-0566">Pantothenate biosynthesis</keyword>
<keyword id="KW-0808">Transferase</keyword>
<feature type="chain" id="PRO_0000184911" description="3-methyl-2-oxobutanoate hydroxymethyltransferase">
    <location>
        <begin position="1"/>
        <end position="272"/>
    </location>
</feature>
<feature type="active site" description="Proton acceptor" evidence="1">
    <location>
        <position position="187"/>
    </location>
</feature>
<feature type="binding site" evidence="1">
    <location>
        <begin position="51"/>
        <end position="52"/>
    </location>
    <ligand>
        <name>3-methyl-2-oxobutanoate</name>
        <dbReference type="ChEBI" id="CHEBI:11851"/>
    </ligand>
</feature>
<feature type="binding site" evidence="1">
    <location>
        <position position="51"/>
    </location>
    <ligand>
        <name>Mg(2+)</name>
        <dbReference type="ChEBI" id="CHEBI:18420"/>
    </ligand>
</feature>
<feature type="binding site" evidence="1">
    <location>
        <position position="90"/>
    </location>
    <ligand>
        <name>3-methyl-2-oxobutanoate</name>
        <dbReference type="ChEBI" id="CHEBI:11851"/>
    </ligand>
</feature>
<feature type="binding site" evidence="1">
    <location>
        <position position="90"/>
    </location>
    <ligand>
        <name>Mg(2+)</name>
        <dbReference type="ChEBI" id="CHEBI:18420"/>
    </ligand>
</feature>
<feature type="binding site" evidence="1">
    <location>
        <position position="118"/>
    </location>
    <ligand>
        <name>3-methyl-2-oxobutanoate</name>
        <dbReference type="ChEBI" id="CHEBI:11851"/>
    </ligand>
</feature>
<feature type="binding site" evidence="1">
    <location>
        <position position="120"/>
    </location>
    <ligand>
        <name>Mg(2+)</name>
        <dbReference type="ChEBI" id="CHEBI:18420"/>
    </ligand>
</feature>
<evidence type="ECO:0000255" key="1">
    <source>
        <dbReference type="HAMAP-Rule" id="MF_00156"/>
    </source>
</evidence>
<evidence type="ECO:0000305" key="2"/>
<dbReference type="EC" id="2.1.2.11" evidence="1"/>
<dbReference type="EMBL" id="AE003849">
    <property type="protein sequence ID" value="AAF83042.1"/>
    <property type="status" value="ALT_INIT"/>
    <property type="molecule type" value="Genomic_DNA"/>
</dbReference>
<dbReference type="PIR" id="E82832">
    <property type="entry name" value="E82832"/>
</dbReference>
<dbReference type="RefSeq" id="WP_010892770.1">
    <property type="nucleotide sequence ID" value="NC_002488.3"/>
</dbReference>
<dbReference type="SMR" id="Q9PGR9"/>
<dbReference type="STRING" id="160492.XF_0229"/>
<dbReference type="KEGG" id="xfa:XF_0229"/>
<dbReference type="eggNOG" id="COG0413">
    <property type="taxonomic scope" value="Bacteria"/>
</dbReference>
<dbReference type="HOGENOM" id="CLU_036645_1_0_6"/>
<dbReference type="UniPathway" id="UPA00028">
    <property type="reaction ID" value="UER00003"/>
</dbReference>
<dbReference type="Proteomes" id="UP000000812">
    <property type="component" value="Chromosome"/>
</dbReference>
<dbReference type="GO" id="GO:0005737">
    <property type="term" value="C:cytoplasm"/>
    <property type="evidence" value="ECO:0007669"/>
    <property type="project" value="UniProtKB-SubCell"/>
</dbReference>
<dbReference type="GO" id="GO:0003864">
    <property type="term" value="F:3-methyl-2-oxobutanoate hydroxymethyltransferase activity"/>
    <property type="evidence" value="ECO:0007669"/>
    <property type="project" value="UniProtKB-UniRule"/>
</dbReference>
<dbReference type="GO" id="GO:0000287">
    <property type="term" value="F:magnesium ion binding"/>
    <property type="evidence" value="ECO:0007669"/>
    <property type="project" value="TreeGrafter"/>
</dbReference>
<dbReference type="GO" id="GO:0015940">
    <property type="term" value="P:pantothenate biosynthetic process"/>
    <property type="evidence" value="ECO:0007669"/>
    <property type="project" value="UniProtKB-UniRule"/>
</dbReference>
<dbReference type="CDD" id="cd06557">
    <property type="entry name" value="KPHMT-like"/>
    <property type="match status" value="1"/>
</dbReference>
<dbReference type="FunFam" id="3.20.20.60:FF:000003">
    <property type="entry name" value="3-methyl-2-oxobutanoate hydroxymethyltransferase"/>
    <property type="match status" value="1"/>
</dbReference>
<dbReference type="Gene3D" id="3.20.20.60">
    <property type="entry name" value="Phosphoenolpyruvate-binding domains"/>
    <property type="match status" value="1"/>
</dbReference>
<dbReference type="HAMAP" id="MF_00156">
    <property type="entry name" value="PanB"/>
    <property type="match status" value="1"/>
</dbReference>
<dbReference type="InterPro" id="IPR003700">
    <property type="entry name" value="Pantoate_hydroxy_MeTrfase"/>
</dbReference>
<dbReference type="InterPro" id="IPR015813">
    <property type="entry name" value="Pyrv/PenolPyrv_kinase-like_dom"/>
</dbReference>
<dbReference type="InterPro" id="IPR040442">
    <property type="entry name" value="Pyrv_kinase-like_dom_sf"/>
</dbReference>
<dbReference type="NCBIfam" id="TIGR00222">
    <property type="entry name" value="panB"/>
    <property type="match status" value="1"/>
</dbReference>
<dbReference type="NCBIfam" id="NF001452">
    <property type="entry name" value="PRK00311.1"/>
    <property type="match status" value="1"/>
</dbReference>
<dbReference type="PANTHER" id="PTHR20881">
    <property type="entry name" value="3-METHYL-2-OXOBUTANOATE HYDROXYMETHYLTRANSFERASE"/>
    <property type="match status" value="1"/>
</dbReference>
<dbReference type="PANTHER" id="PTHR20881:SF0">
    <property type="entry name" value="3-METHYL-2-OXOBUTANOATE HYDROXYMETHYLTRANSFERASE"/>
    <property type="match status" value="1"/>
</dbReference>
<dbReference type="Pfam" id="PF02548">
    <property type="entry name" value="Pantoate_transf"/>
    <property type="match status" value="1"/>
</dbReference>
<dbReference type="PIRSF" id="PIRSF000388">
    <property type="entry name" value="Pantoate_hydroxy_MeTrfase"/>
    <property type="match status" value="1"/>
</dbReference>
<dbReference type="SUPFAM" id="SSF51621">
    <property type="entry name" value="Phosphoenolpyruvate/pyruvate domain"/>
    <property type="match status" value="1"/>
</dbReference>
<accession>Q9PGR9</accession>
<proteinExistence type="inferred from homology"/>
<comment type="function">
    <text evidence="1">Catalyzes the reversible reaction in which hydroxymethyl group from 5,10-methylenetetrahydrofolate is transferred onto alpha-ketoisovalerate to form ketopantoate.</text>
</comment>
<comment type="catalytic activity">
    <reaction evidence="1">
        <text>3-methyl-2-oxobutanoate + (6R)-5,10-methylene-5,6,7,8-tetrahydrofolate + H2O = 2-dehydropantoate + (6S)-5,6,7,8-tetrahydrofolate</text>
        <dbReference type="Rhea" id="RHEA:11824"/>
        <dbReference type="ChEBI" id="CHEBI:11561"/>
        <dbReference type="ChEBI" id="CHEBI:11851"/>
        <dbReference type="ChEBI" id="CHEBI:15377"/>
        <dbReference type="ChEBI" id="CHEBI:15636"/>
        <dbReference type="ChEBI" id="CHEBI:57453"/>
        <dbReference type="EC" id="2.1.2.11"/>
    </reaction>
</comment>
<comment type="cofactor">
    <cofactor evidence="1">
        <name>Mg(2+)</name>
        <dbReference type="ChEBI" id="CHEBI:18420"/>
    </cofactor>
    <text evidence="1">Binds 1 Mg(2+) ion per subunit.</text>
</comment>
<comment type="pathway">
    <text evidence="1">Cofactor biosynthesis; (R)-pantothenate biosynthesis; (R)-pantoate from 3-methyl-2-oxobutanoate: step 1/2.</text>
</comment>
<comment type="subunit">
    <text evidence="1">Homodecamer; pentamer of dimers.</text>
</comment>
<comment type="subcellular location">
    <subcellularLocation>
        <location evidence="1">Cytoplasm</location>
    </subcellularLocation>
</comment>
<comment type="similarity">
    <text evidence="1">Belongs to the PanB family.</text>
</comment>
<comment type="sequence caution" evidence="2">
    <conflict type="erroneous initiation">
        <sequence resource="EMBL-CDS" id="AAF83042"/>
    </conflict>
</comment>